<accession>E3PZS3</accession>
<keyword id="KW-0150">Chloroplast</keyword>
<keyword id="KW-0275">Fatty acid biosynthesis</keyword>
<keyword id="KW-0276">Fatty acid metabolism</keyword>
<keyword id="KW-0408">Iron</keyword>
<keyword id="KW-0444">Lipid biosynthesis</keyword>
<keyword id="KW-0443">Lipid metabolism</keyword>
<keyword id="KW-0479">Metal-binding</keyword>
<keyword id="KW-0560">Oxidoreductase</keyword>
<keyword id="KW-0934">Plastid</keyword>
<keyword id="KW-0809">Transit peptide</keyword>
<comment type="function">
    <text evidence="1">Converts stearoyl-ACP to oleoyl-ACP by introduction of a cis double bond between carbons 9 and 10 of the acyl chain. Converts palmitoyl-ACP to (4Z)-hexadec-4-enoyl-ACP by introduction of a cis double bond between carbons 4 and 5 of the acyl chain. Catalyzes the desaturation of saturated fatty acid 18:0 and 16:0 to generate 18:1 (delta-9) and 16:1 (delta-4) intermediates, expected to give rise to 9-alkenes and 12-alkenes, respectively.</text>
</comment>
<comment type="catalytic activity">
    <reaction evidence="1">
        <text>hexadecanoyl-[ACP] + 2 reduced [2Fe-2S]-[ferredoxin] + O2 + 2 H(+) = (4Z)-hexadecenoyl-[ACP] + 2 oxidized [2Fe-2S]-[ferredoxin] + 2 H2O</text>
        <dbReference type="Rhea" id="RHEA:38043"/>
        <dbReference type="Rhea" id="RHEA-COMP:9652"/>
        <dbReference type="Rhea" id="RHEA-COMP:10000"/>
        <dbReference type="Rhea" id="RHEA-COMP:10001"/>
        <dbReference type="Rhea" id="RHEA-COMP:11488"/>
        <dbReference type="ChEBI" id="CHEBI:15377"/>
        <dbReference type="ChEBI" id="CHEBI:15378"/>
        <dbReference type="ChEBI" id="CHEBI:15379"/>
        <dbReference type="ChEBI" id="CHEBI:33737"/>
        <dbReference type="ChEBI" id="CHEBI:33738"/>
        <dbReference type="ChEBI" id="CHEBI:78483"/>
        <dbReference type="ChEBI" id="CHEBI:85919"/>
        <dbReference type="EC" id="1.14.19.11"/>
    </reaction>
</comment>
<comment type="catalytic activity">
    <reaction evidence="1">
        <text>octadecanoyl-[ACP] + 2 reduced [2Fe-2S]-[ferredoxin] + O2 + 2 H(+) = (9Z)-octadecenoyl-[ACP] + 2 oxidized [2Fe-2S]-[ferredoxin] + 2 H2O</text>
        <dbReference type="Rhea" id="RHEA:11776"/>
        <dbReference type="Rhea" id="RHEA-COMP:9656"/>
        <dbReference type="Rhea" id="RHEA-COMP:9924"/>
        <dbReference type="Rhea" id="RHEA-COMP:10000"/>
        <dbReference type="Rhea" id="RHEA-COMP:10001"/>
        <dbReference type="ChEBI" id="CHEBI:15377"/>
        <dbReference type="ChEBI" id="CHEBI:15378"/>
        <dbReference type="ChEBI" id="CHEBI:15379"/>
        <dbReference type="ChEBI" id="CHEBI:33737"/>
        <dbReference type="ChEBI" id="CHEBI:33738"/>
        <dbReference type="ChEBI" id="CHEBI:78495"/>
        <dbReference type="ChEBI" id="CHEBI:78783"/>
        <dbReference type="EC" id="1.14.19.2"/>
    </reaction>
</comment>
<comment type="cofactor">
    <cofactor evidence="2">
        <name>Fe(2+)</name>
        <dbReference type="ChEBI" id="CHEBI:29033"/>
    </cofactor>
    <text evidence="2">Binds 2 Fe(2+) ions per subunit.</text>
</comment>
<comment type="pathway">
    <text>Lipid metabolism; fatty acid metabolism.</text>
</comment>
<comment type="subunit">
    <text evidence="2">Homodimer.</text>
</comment>
<comment type="subcellular location">
    <subcellularLocation>
        <location evidence="2">Plastid</location>
        <location evidence="2">Chloroplast stroma</location>
    </subcellularLocation>
</comment>
<comment type="tissue specificity">
    <text evidence="4">Preferentially expressed in the flower labellum.</text>
</comment>
<comment type="similarity">
    <text evidence="5">Belongs to the fatty acid desaturase type 2 family.</text>
</comment>
<proteinExistence type="evidence at transcript level"/>
<feature type="transit peptide" description="Chloroplast" evidence="3">
    <location>
        <begin position="1"/>
        <end position="33"/>
    </location>
</feature>
<feature type="chain" id="PRO_0000417066" description="Palmitoyl-[acyl-carrier-protein] 4-desaturase 2, chloroplastic">
    <location>
        <begin position="34"/>
        <end position="376"/>
    </location>
</feature>
<feature type="binding site" evidence="2">
    <location>
        <position position="114"/>
    </location>
    <ligand>
        <name>Fe cation</name>
        <dbReference type="ChEBI" id="CHEBI:24875"/>
        <label>1</label>
    </ligand>
</feature>
<feature type="binding site" evidence="2">
    <location>
        <position position="149"/>
    </location>
    <ligand>
        <name>Fe cation</name>
        <dbReference type="ChEBI" id="CHEBI:24875"/>
        <label>1</label>
    </ligand>
</feature>
<feature type="binding site" evidence="2">
    <location>
        <position position="149"/>
    </location>
    <ligand>
        <name>Fe cation</name>
        <dbReference type="ChEBI" id="CHEBI:24875"/>
        <label>2</label>
    </ligand>
</feature>
<feature type="binding site" evidence="2">
    <location>
        <position position="152"/>
    </location>
    <ligand>
        <name>Fe cation</name>
        <dbReference type="ChEBI" id="CHEBI:24875"/>
        <label>1</label>
    </ligand>
</feature>
<feature type="binding site" evidence="2">
    <location>
        <position position="202"/>
    </location>
    <ligand>
        <name>Fe cation</name>
        <dbReference type="ChEBI" id="CHEBI:24875"/>
        <label>2</label>
    </ligand>
</feature>
<feature type="binding site" evidence="2">
    <location>
        <position position="235"/>
    </location>
    <ligand>
        <name>Fe cation</name>
        <dbReference type="ChEBI" id="CHEBI:24875"/>
        <label>1</label>
    </ligand>
</feature>
<feature type="binding site" evidence="2">
    <location>
        <position position="235"/>
    </location>
    <ligand>
        <name>Fe cation</name>
        <dbReference type="ChEBI" id="CHEBI:24875"/>
        <label>2</label>
    </ligand>
</feature>
<feature type="binding site" evidence="2">
    <location>
        <position position="238"/>
    </location>
    <ligand>
        <name>Fe cation</name>
        <dbReference type="ChEBI" id="CHEBI:24875"/>
        <label>2</label>
    </ligand>
</feature>
<name>STAD2_OPHAA</name>
<evidence type="ECO:0000250" key="1">
    <source>
        <dbReference type="UniProtKB" id="E3PZS2"/>
    </source>
</evidence>
<evidence type="ECO:0000250" key="2">
    <source>
        <dbReference type="UniProtKB" id="P22337"/>
    </source>
</evidence>
<evidence type="ECO:0000255" key="3"/>
<evidence type="ECO:0000269" key="4">
    <source>
    </source>
</evidence>
<evidence type="ECO:0000305" key="5"/>
<sequence length="376" mass="42465">MELHLALRASPLPAADPGRRPPPPRGNFATNCTAAINSTHISQEKFRSLDSWVEHNMLTFLKPVEKCWQPQDFLPDPSHLSAEELGDAVREIHERAAEIPDEVWVCMVGNMVTEEALPTYQSLISSVLGGTVAGSTPWDRWIRGWSAEENRHGDLLNKYLYLTGRLDMRQVEKTIQYLIGSGMDVGVGNSILCGFIYTCFQEKATFIPHGNTARLAKHHGDTTLAKICGLVAADEKRHAAAYTNLMRKLFEVDPNESMLAFAHVMQARVTMPASRMFDGRDPHLFTHFSDVSQKIGVYTVGDYSEMLDFFLKEWDISAIVDGLSPEGRRVQEYVCGLPEVMRKLAERADDRRKKLVNVGEPRYIPFSWIFNKQVRV</sequence>
<dbReference type="EC" id="1.14.19.11" evidence="1"/>
<dbReference type="EC" id="1.14.19.2" evidence="1"/>
<dbReference type="EMBL" id="FR688110">
    <property type="protein sequence ID" value="CBW95567.1"/>
    <property type="molecule type" value="mRNA"/>
</dbReference>
<dbReference type="SMR" id="E3PZS3"/>
<dbReference type="UniPathway" id="UPA00199"/>
<dbReference type="GO" id="GO:0009570">
    <property type="term" value="C:chloroplast stroma"/>
    <property type="evidence" value="ECO:0007669"/>
    <property type="project" value="UniProtKB-SubCell"/>
</dbReference>
<dbReference type="GO" id="GO:0046872">
    <property type="term" value="F:metal ion binding"/>
    <property type="evidence" value="ECO:0007669"/>
    <property type="project" value="UniProtKB-KW"/>
</dbReference>
<dbReference type="GO" id="GO:0045300">
    <property type="term" value="F:stearoyl-[ACP] desaturase activity"/>
    <property type="evidence" value="ECO:0007669"/>
    <property type="project" value="UniProtKB-EC"/>
</dbReference>
<dbReference type="GO" id="GO:0006633">
    <property type="term" value="P:fatty acid biosynthetic process"/>
    <property type="evidence" value="ECO:0007669"/>
    <property type="project" value="UniProtKB-KW"/>
</dbReference>
<dbReference type="CDD" id="cd01050">
    <property type="entry name" value="Acyl_ACP_Desat"/>
    <property type="match status" value="1"/>
</dbReference>
<dbReference type="FunFam" id="1.10.620.20:FF:000002">
    <property type="entry name" value="Stearoyl-[acyl-carrier-protein] 9-desaturase, chloroplastic"/>
    <property type="match status" value="1"/>
</dbReference>
<dbReference type="Gene3D" id="1.10.620.20">
    <property type="entry name" value="Ribonucleotide Reductase, subunit A"/>
    <property type="match status" value="1"/>
</dbReference>
<dbReference type="InterPro" id="IPR005067">
    <property type="entry name" value="Fatty_acid_desaturase-2"/>
</dbReference>
<dbReference type="InterPro" id="IPR009078">
    <property type="entry name" value="Ferritin-like_SF"/>
</dbReference>
<dbReference type="InterPro" id="IPR012348">
    <property type="entry name" value="RNR-like"/>
</dbReference>
<dbReference type="PANTHER" id="PTHR31155">
    <property type="entry name" value="ACYL- ACYL-CARRIER-PROTEIN DESATURASE-RELATED"/>
    <property type="match status" value="1"/>
</dbReference>
<dbReference type="PANTHER" id="PTHR31155:SF14">
    <property type="entry name" value="STEAROYL-ACYL-CARRIER-PROTEIN DESATURASE7"/>
    <property type="match status" value="1"/>
</dbReference>
<dbReference type="Pfam" id="PF03405">
    <property type="entry name" value="FA_desaturase_2"/>
    <property type="match status" value="1"/>
</dbReference>
<dbReference type="PIRSF" id="PIRSF000346">
    <property type="entry name" value="Dlt9_acylACP_des"/>
    <property type="match status" value="1"/>
</dbReference>
<dbReference type="SUPFAM" id="SSF47240">
    <property type="entry name" value="Ferritin-like"/>
    <property type="match status" value="1"/>
</dbReference>
<protein>
    <recommendedName>
        <fullName>Palmitoyl-[acyl-carrier-protein] 4-desaturase 2, chloroplastic</fullName>
        <ecNumber evidence="1">1.14.19.11</ecNumber>
    </recommendedName>
    <alternativeName>
        <fullName>Acyl-[acyl-carrier-protein] desaturase 2</fullName>
    </alternativeName>
    <alternativeName>
        <fullName>Stearoyl-[acyl-carrier-protein] 9-desaturase 2</fullName>
        <shortName>Stearoyl-ACP desaturase 2</shortName>
        <ecNumber evidence="1">1.14.19.2</ecNumber>
    </alternativeName>
</protein>
<gene>
    <name type="primary">SAD2</name>
</gene>
<reference key="1">
    <citation type="journal article" date="2011" name="Proc. Natl. Acad. Sci. U.S.A.">
        <title>Stearoyl-acyl carrier protein desaturases are associated with floral isolation in sexually deceptive orchids.</title>
        <authorList>
            <person name="Schlueter P.M."/>
            <person name="Xu S."/>
            <person name="Gagliardini V."/>
            <person name="Whittle E."/>
            <person name="Shanklin J."/>
            <person name="Grossniklaus U."/>
            <person name="Schiestl F.P."/>
        </authorList>
    </citation>
    <scope>NUCLEOTIDE SEQUENCE [MRNA]</scope>
    <scope>TISSUE SPECIFICITY</scope>
    <source>
        <tissue>Flower</tissue>
    </source>
</reference>
<organism>
    <name type="scientific">Ophrys arachnitiformis subsp. archipelagi</name>
    <name type="common">Orchid</name>
    <name type="synonym">Ophrys exaltata subsp. archipelagi</name>
    <dbReference type="NCBI Taxonomy" id="884019"/>
    <lineage>
        <taxon>Eukaryota</taxon>
        <taxon>Viridiplantae</taxon>
        <taxon>Streptophyta</taxon>
        <taxon>Embryophyta</taxon>
        <taxon>Tracheophyta</taxon>
        <taxon>Spermatophyta</taxon>
        <taxon>Magnoliopsida</taxon>
        <taxon>Liliopsida</taxon>
        <taxon>Asparagales</taxon>
        <taxon>Orchidaceae</taxon>
        <taxon>Orchidoideae</taxon>
        <taxon>Orchideae</taxon>
        <taxon>Orchidinae</taxon>
        <taxon>Ophrys</taxon>
    </lineage>
</organism>